<comment type="similarity">
    <text evidence="2">Belongs to the archaeal ATPase family.</text>
</comment>
<sequence>MFFDREKELSKLLKIIESEPSLITFIYGPINSGKTALIQEFIRKMPDHYVAFYINLRATPITKYEDFIDILFSIEFENPIKNLKEALSLVISAGKEILGIPIPNDFLKQILSENKPKNAFLYITKLLTEVKRRGKRPILILDELQVIGDLRINGPLIYEIFNFFIHLTKEAHLSHVFTITSDSLFMERIYSEAMLQGRADYFLVDDFDEKTALNFLKSQGLTEEEANLALEYFGGKPPYLIEAIKHREELEDYCKKALAMRTRQVYSFAYGKRRIIKLLTEFKNKEEVPFTGKVTRTLEEAVKANILFVDPLNGIIKPQGRLELLAIREALRMLT</sequence>
<name>Y626_PYRAB</name>
<accession>Q9V103</accession>
<accession>G8ZJ93</accession>
<feature type="chain" id="PRO_0000184686" description="Uncharacterized ATP-binding protein PYRAB06260">
    <location>
        <begin position="1"/>
        <end position="335"/>
    </location>
</feature>
<feature type="binding site" evidence="1">
    <location>
        <begin position="28"/>
        <end position="35"/>
    </location>
    <ligand>
        <name>ATP</name>
        <dbReference type="ChEBI" id="CHEBI:30616"/>
    </ligand>
</feature>
<evidence type="ECO:0000255" key="1"/>
<evidence type="ECO:0000305" key="2"/>
<protein>
    <recommendedName>
        <fullName>Uncharacterized ATP-binding protein PYRAB06260</fullName>
    </recommendedName>
</protein>
<proteinExistence type="inferred from homology"/>
<dbReference type="EMBL" id="AJ248284">
    <property type="protein sequence ID" value="CAB49548.1"/>
    <property type="molecule type" value="Genomic_DNA"/>
</dbReference>
<dbReference type="EMBL" id="HE613800">
    <property type="protein sequence ID" value="CCE70020.1"/>
    <property type="molecule type" value="Genomic_DNA"/>
</dbReference>
<dbReference type="PIR" id="E75183">
    <property type="entry name" value="E75183"/>
</dbReference>
<dbReference type="RefSeq" id="WP_010867750.1">
    <property type="nucleotide sequence ID" value="NC_000868.1"/>
</dbReference>
<dbReference type="SMR" id="Q9V103"/>
<dbReference type="STRING" id="272844.PAB1945"/>
<dbReference type="KEGG" id="pab:PAB1945"/>
<dbReference type="PATRIC" id="fig|272844.11.peg.666"/>
<dbReference type="eggNOG" id="arCOG03407">
    <property type="taxonomic scope" value="Archaea"/>
</dbReference>
<dbReference type="HOGENOM" id="CLU_068608_0_0_2"/>
<dbReference type="OrthoDB" id="86228at2157"/>
<dbReference type="PhylomeDB" id="Q9V103"/>
<dbReference type="Proteomes" id="UP000000810">
    <property type="component" value="Chromosome"/>
</dbReference>
<dbReference type="Proteomes" id="UP000009139">
    <property type="component" value="Chromosome"/>
</dbReference>
<dbReference type="GO" id="GO:0005524">
    <property type="term" value="F:ATP binding"/>
    <property type="evidence" value="ECO:0007669"/>
    <property type="project" value="UniProtKB-KW"/>
</dbReference>
<dbReference type="GO" id="GO:0016887">
    <property type="term" value="F:ATP hydrolysis activity"/>
    <property type="evidence" value="ECO:0007669"/>
    <property type="project" value="InterPro"/>
</dbReference>
<dbReference type="Gene3D" id="3.40.50.300">
    <property type="entry name" value="P-loop containing nucleotide triphosphate hydrolases"/>
    <property type="match status" value="1"/>
</dbReference>
<dbReference type="Gene3D" id="1.10.10.10">
    <property type="entry name" value="Winged helix-like DNA-binding domain superfamily/Winged helix DNA-binding domain"/>
    <property type="match status" value="1"/>
</dbReference>
<dbReference type="InterPro" id="IPR003593">
    <property type="entry name" value="AAA+_ATPase"/>
</dbReference>
<dbReference type="InterPro" id="IPR011579">
    <property type="entry name" value="ATPase_dom"/>
</dbReference>
<dbReference type="InterPro" id="IPR049081">
    <property type="entry name" value="MJ1010-like_2nd"/>
</dbReference>
<dbReference type="InterPro" id="IPR027417">
    <property type="entry name" value="P-loop_NTPase"/>
</dbReference>
<dbReference type="InterPro" id="IPR036388">
    <property type="entry name" value="WH-like_DNA-bd_sf"/>
</dbReference>
<dbReference type="PANTHER" id="PTHR34301:SF8">
    <property type="entry name" value="ATPASE DOMAIN-CONTAINING PROTEIN"/>
    <property type="match status" value="1"/>
</dbReference>
<dbReference type="PANTHER" id="PTHR34301">
    <property type="entry name" value="DNA-BINDING PROTEIN-RELATED"/>
    <property type="match status" value="1"/>
</dbReference>
<dbReference type="Pfam" id="PF01637">
    <property type="entry name" value="ATPase_2"/>
    <property type="match status" value="1"/>
</dbReference>
<dbReference type="Pfam" id="PF21690">
    <property type="entry name" value="MJ1010-like_2nd"/>
    <property type="match status" value="1"/>
</dbReference>
<dbReference type="SMART" id="SM00382">
    <property type="entry name" value="AAA"/>
    <property type="match status" value="1"/>
</dbReference>
<dbReference type="SUPFAM" id="SSF52540">
    <property type="entry name" value="P-loop containing nucleoside triphosphate hydrolases"/>
    <property type="match status" value="1"/>
</dbReference>
<gene>
    <name type="ordered locus">PYRAB06260</name>
    <name type="ORF">PAB1945</name>
</gene>
<organism>
    <name type="scientific">Pyrococcus abyssi (strain GE5 / Orsay)</name>
    <dbReference type="NCBI Taxonomy" id="272844"/>
    <lineage>
        <taxon>Archaea</taxon>
        <taxon>Methanobacteriati</taxon>
        <taxon>Methanobacteriota</taxon>
        <taxon>Thermococci</taxon>
        <taxon>Thermococcales</taxon>
        <taxon>Thermococcaceae</taxon>
        <taxon>Pyrococcus</taxon>
    </lineage>
</organism>
<reference key="1">
    <citation type="journal article" date="2003" name="Mol. Microbiol.">
        <title>An integrated analysis of the genome of the hyperthermophilic archaeon Pyrococcus abyssi.</title>
        <authorList>
            <person name="Cohen G.N."/>
            <person name="Barbe V."/>
            <person name="Flament D."/>
            <person name="Galperin M."/>
            <person name="Heilig R."/>
            <person name="Lecompte O."/>
            <person name="Poch O."/>
            <person name="Prieur D."/>
            <person name="Querellou J."/>
            <person name="Ripp R."/>
            <person name="Thierry J.-C."/>
            <person name="Van der Oost J."/>
            <person name="Weissenbach J."/>
            <person name="Zivanovic Y."/>
            <person name="Forterre P."/>
        </authorList>
    </citation>
    <scope>NUCLEOTIDE SEQUENCE [LARGE SCALE GENOMIC DNA]</scope>
    <source>
        <strain>GE5 / Orsay</strain>
    </source>
</reference>
<reference key="2">
    <citation type="journal article" date="2012" name="Curr. Microbiol.">
        <title>Re-annotation of two hyperthermophilic archaea Pyrococcus abyssi GE5 and Pyrococcus furiosus DSM 3638.</title>
        <authorList>
            <person name="Gao J."/>
            <person name="Wang J."/>
        </authorList>
    </citation>
    <scope>GENOME REANNOTATION</scope>
    <source>
        <strain>GE5 / Orsay</strain>
    </source>
</reference>
<keyword id="KW-0067">ATP-binding</keyword>
<keyword id="KW-0547">Nucleotide-binding</keyword>